<accession>P11495</accession>
<organism>
    <name type="scientific">Metridium senile</name>
    <name type="common">Brown sea anemone</name>
    <name type="synonym">Frilled sea anemone</name>
    <dbReference type="NCBI Taxonomy" id="6116"/>
    <lineage>
        <taxon>Eukaryota</taxon>
        <taxon>Metazoa</taxon>
        <taxon>Cnidaria</taxon>
        <taxon>Anthozoa</taxon>
        <taxon>Hexacorallia</taxon>
        <taxon>Actiniaria</taxon>
        <taxon>Nynantheae</taxon>
        <taxon>Metridiidae</taxon>
        <taxon>Metridium</taxon>
    </lineage>
</organism>
<feature type="peptide" id="PRO_0000044862" description="U-metritoxin-Msn1a" evidence="4">
    <location>
        <begin position="1"/>
        <end position="36"/>
    </location>
</feature>
<feature type="domain" description="ShKT" evidence="3">
    <location>
        <begin position="4"/>
        <end position="36"/>
    </location>
</feature>
<feature type="disulfide bond" evidence="3">
    <location>
        <begin position="4"/>
        <end position="36"/>
    </location>
</feature>
<feature type="disulfide bond" evidence="3">
    <location>
        <begin position="11"/>
        <end position="28"/>
    </location>
</feature>
<feature type="disulfide bond" evidence="3">
    <location>
        <begin position="19"/>
        <end position="32"/>
    </location>
</feature>
<proteinExistence type="evidence at protein level"/>
<protein>
    <recommendedName>
        <fullName evidence="5">U-metritoxin-Msn1a</fullName>
        <shortName evidence="5">U-MTTX-Msn1a</shortName>
    </recommendedName>
    <alternativeName>
        <fullName evidence="6">Metridin</fullName>
    </alternativeName>
</protein>
<name>K1B_METSE</name>
<keyword id="KW-0204">Cytolysis</keyword>
<keyword id="KW-0903">Direct protein sequencing</keyword>
<keyword id="KW-1015">Disulfide bond</keyword>
<keyword id="KW-0354">Hemolysis</keyword>
<keyword id="KW-0872">Ion channel impairing toxin</keyword>
<keyword id="KW-0166">Nematocyst</keyword>
<keyword id="KW-0528">Neurotoxin</keyword>
<keyword id="KW-0632">Potassium channel impairing toxin</keyword>
<keyword id="KW-0964">Secreted</keyword>
<keyword id="KW-0800">Toxin</keyword>
<keyword id="KW-1220">Voltage-gated potassium channel impairing toxin</keyword>
<dbReference type="PIR" id="A27222">
    <property type="entry name" value="A27222"/>
</dbReference>
<dbReference type="SMR" id="P11495"/>
<dbReference type="GO" id="GO:0005576">
    <property type="term" value="C:extracellular region"/>
    <property type="evidence" value="ECO:0007669"/>
    <property type="project" value="UniProtKB-SubCell"/>
</dbReference>
<dbReference type="GO" id="GO:0042151">
    <property type="term" value="C:nematocyst"/>
    <property type="evidence" value="ECO:0007669"/>
    <property type="project" value="UniProtKB-SubCell"/>
</dbReference>
<dbReference type="GO" id="GO:0015459">
    <property type="term" value="F:potassium channel regulator activity"/>
    <property type="evidence" value="ECO:0007669"/>
    <property type="project" value="UniProtKB-KW"/>
</dbReference>
<dbReference type="GO" id="GO:0090729">
    <property type="term" value="F:toxin activity"/>
    <property type="evidence" value="ECO:0007669"/>
    <property type="project" value="UniProtKB-KW"/>
</dbReference>
<dbReference type="GO" id="GO:0031640">
    <property type="term" value="P:killing of cells of another organism"/>
    <property type="evidence" value="ECO:0007669"/>
    <property type="project" value="UniProtKB-KW"/>
</dbReference>
<dbReference type="InterPro" id="IPR003582">
    <property type="entry name" value="ShKT_dom"/>
</dbReference>
<dbReference type="PROSITE" id="PS51670">
    <property type="entry name" value="SHKT"/>
    <property type="match status" value="1"/>
</dbReference>
<comment type="function">
    <text evidence="2 4">Has hemolytic activity (Ref.1). Inhibits voltage-gated potassium channels (Kv1/KCNA) (By similarity).</text>
</comment>
<comment type="subcellular location">
    <subcellularLocation>
        <location evidence="1">Secreted</location>
    </subcellularLocation>
    <subcellularLocation>
        <location evidence="1">Nematocyst</location>
    </subcellularLocation>
</comment>
<comment type="similarity">
    <text evidence="7">Belongs to the sea anemone type 1 potassium channel toxin family. Type 1b subfamily.</text>
</comment>
<evidence type="ECO:0000250" key="1">
    <source>
        <dbReference type="UniProtKB" id="C0HJC2"/>
    </source>
</evidence>
<evidence type="ECO:0000250" key="2">
    <source>
        <dbReference type="UniProtKB" id="P29186"/>
    </source>
</evidence>
<evidence type="ECO:0000255" key="3">
    <source>
        <dbReference type="PROSITE-ProRule" id="PRU01005"/>
    </source>
</evidence>
<evidence type="ECO:0000269" key="4">
    <source ref="1"/>
</evidence>
<evidence type="ECO:0000303" key="5">
    <source>
    </source>
</evidence>
<evidence type="ECO:0000303" key="6">
    <source ref="1"/>
</evidence>
<evidence type="ECO:0000305" key="7"/>
<sequence>DSDCKDKLPACGEYRGSFCKLEKVKSNCEKTCGVKC</sequence>
<reference key="1">
    <citation type="journal article" date="1987" name="Naturwissenschaften">
        <title>Isolation and structural determination of a hemolytic active peptide from the sea anemone Metridium senile.</title>
        <authorList>
            <person name="Krebs H.C."/>
            <person name="Habermehl G.G."/>
        </authorList>
    </citation>
    <scope>PROTEIN SEQUENCE</scope>
    <scope>FUNCTION</scope>
    <source>
        <tissue>Nematoblast</tissue>
    </source>
</reference>
<reference key="2">
    <citation type="journal article" date="2012" name="Toxicon">
        <title>Development of a rational nomenclature for naming peptide and protein toxins from sea anemones.</title>
        <authorList>
            <person name="Oliveira J.S."/>
            <person name="Fuentes-Silva D."/>
            <person name="King G.F."/>
        </authorList>
    </citation>
    <scope>NOMENCLATURE</scope>
</reference>